<proteinExistence type="inferred from homology"/>
<gene>
    <name evidence="1" type="primary">cca</name>
    <name type="ordered locus">SbBS512_E3487</name>
</gene>
<evidence type="ECO:0000255" key="1">
    <source>
        <dbReference type="HAMAP-Rule" id="MF_01261"/>
    </source>
</evidence>
<protein>
    <recommendedName>
        <fullName evidence="1">Multifunctional CCA protein</fullName>
    </recommendedName>
    <domain>
        <recommendedName>
            <fullName evidence="1">CCA-adding enzyme</fullName>
            <ecNumber evidence="1">2.7.7.72</ecNumber>
        </recommendedName>
        <alternativeName>
            <fullName evidence="1">CCA tRNA nucleotidyltransferase</fullName>
        </alternativeName>
        <alternativeName>
            <fullName evidence="1">tRNA CCA-pyrophosphorylase</fullName>
        </alternativeName>
        <alternativeName>
            <fullName evidence="1">tRNA adenylyl-/cytidylyl-transferase</fullName>
        </alternativeName>
        <alternativeName>
            <fullName evidence="1">tRNA nucleotidyltransferase</fullName>
        </alternativeName>
        <alternativeName>
            <fullName evidence="1">tRNA-NT</fullName>
        </alternativeName>
    </domain>
    <domain>
        <recommendedName>
            <fullName evidence="1">2'-nucleotidase</fullName>
            <ecNumber evidence="1">3.1.3.-</ecNumber>
        </recommendedName>
    </domain>
    <domain>
        <recommendedName>
            <fullName evidence="1">2',3'-cyclic phosphodiesterase</fullName>
            <ecNumber evidence="1">3.1.4.-</ecNumber>
        </recommendedName>
    </domain>
    <domain>
        <recommendedName>
            <fullName evidence="1">Phosphatase</fullName>
            <ecNumber evidence="1">3.1.3.-</ecNumber>
        </recommendedName>
    </domain>
</protein>
<sequence length="412" mass="46511">MKIYLVGGAVRDALLGLPVKDRDWVVVGSTPQEMLDAGYQQVGRDFPVFLHPQTHEEYALARTERKSGSGYTGFTCYAAPDVTLEDDLKRRDLTINALAQDDNGEIIDPYNGLGDLQNRLLRHVSPAFGEDPLRVLRVARFAARYAHLGFRIADETLTLMREMTHAGELEHLTPERVWKETESALTTRNPQVFFQVLRDCGALRVLFPEIDALFGVPAPARWHPEIDTGIHTLMTLSMAAMLSPQVDVRFATLCHDLGKGLTPPELWPRHHGHGPAGVKLVEQLCQRLRVPNEIRDLARLVAEFHDLIHTFPMLNPKTIVKLFDSIDAWRKPQRVEQLALTSEADVRGRTGFESADYPQGRWLREAWEVAQSVPTKAVVEAGFKGVEIREELTRRRIAAVASWKEQRCPKPD</sequence>
<organism>
    <name type="scientific">Shigella boydii serotype 18 (strain CDC 3083-94 / BS512)</name>
    <dbReference type="NCBI Taxonomy" id="344609"/>
    <lineage>
        <taxon>Bacteria</taxon>
        <taxon>Pseudomonadati</taxon>
        <taxon>Pseudomonadota</taxon>
        <taxon>Gammaproteobacteria</taxon>
        <taxon>Enterobacterales</taxon>
        <taxon>Enterobacteriaceae</taxon>
        <taxon>Shigella</taxon>
    </lineage>
</organism>
<comment type="function">
    <text evidence="1">Catalyzes the addition and repair of the essential 3'-terminal CCA sequence in tRNAs without using a nucleic acid template. Adds these three nucleotides in the order of C, C, and A to the tRNA nucleotide-73, using CTP and ATP as substrates and producing inorganic pyrophosphate. tRNA 3'-terminal CCA addition is required both for tRNA processing and repair. Also involved in tRNA surveillance by mediating tandem CCA addition to generate a CCACCA at the 3' terminus of unstable tRNAs. While stable tRNAs receive only 3'-terminal CCA, unstable tRNAs are marked with CCACCA and rapidly degraded.</text>
</comment>
<comment type="catalytic activity">
    <reaction evidence="1">
        <text>a tRNA precursor + 2 CTP + ATP = a tRNA with a 3' CCA end + 3 diphosphate</text>
        <dbReference type="Rhea" id="RHEA:14433"/>
        <dbReference type="Rhea" id="RHEA-COMP:10465"/>
        <dbReference type="Rhea" id="RHEA-COMP:10468"/>
        <dbReference type="ChEBI" id="CHEBI:30616"/>
        <dbReference type="ChEBI" id="CHEBI:33019"/>
        <dbReference type="ChEBI" id="CHEBI:37563"/>
        <dbReference type="ChEBI" id="CHEBI:74896"/>
        <dbReference type="ChEBI" id="CHEBI:83071"/>
        <dbReference type="EC" id="2.7.7.72"/>
    </reaction>
</comment>
<comment type="catalytic activity">
    <reaction evidence="1">
        <text>a tRNA with a 3' CCA end + 2 CTP + ATP = a tRNA with a 3' CCACCA end + 3 diphosphate</text>
        <dbReference type="Rhea" id="RHEA:76235"/>
        <dbReference type="Rhea" id="RHEA-COMP:10468"/>
        <dbReference type="Rhea" id="RHEA-COMP:18655"/>
        <dbReference type="ChEBI" id="CHEBI:30616"/>
        <dbReference type="ChEBI" id="CHEBI:33019"/>
        <dbReference type="ChEBI" id="CHEBI:37563"/>
        <dbReference type="ChEBI" id="CHEBI:83071"/>
        <dbReference type="ChEBI" id="CHEBI:195187"/>
    </reaction>
    <physiologicalReaction direction="left-to-right" evidence="1">
        <dbReference type="Rhea" id="RHEA:76236"/>
    </physiologicalReaction>
</comment>
<comment type="cofactor">
    <cofactor evidence="1">
        <name>Mg(2+)</name>
        <dbReference type="ChEBI" id="CHEBI:18420"/>
    </cofactor>
    <text evidence="1">Magnesium is required for nucleotidyltransferase activity.</text>
</comment>
<comment type="cofactor">
    <cofactor evidence="1">
        <name>Ni(2+)</name>
        <dbReference type="ChEBI" id="CHEBI:49786"/>
    </cofactor>
    <text evidence="1">Nickel for phosphatase activity.</text>
</comment>
<comment type="subunit">
    <text evidence="1">Monomer. Can also form homodimers and oligomers.</text>
</comment>
<comment type="domain">
    <text evidence="1">Comprises two domains: an N-terminal domain containing the nucleotidyltransferase activity and a C-terminal HD domain associated with both phosphodiesterase and phosphatase activities.</text>
</comment>
<comment type="miscellaneous">
    <text evidence="1">A single active site specifically recognizes both ATP and CTP and is responsible for their addition.</text>
</comment>
<comment type="similarity">
    <text evidence="1">Belongs to the tRNA nucleotidyltransferase/poly(A) polymerase family. Bacterial CCA-adding enzyme type 1 subfamily.</text>
</comment>
<name>CCA_SHIB3</name>
<accession>B2U1G0</accession>
<keyword id="KW-0067">ATP-binding</keyword>
<keyword id="KW-0378">Hydrolase</keyword>
<keyword id="KW-0460">Magnesium</keyword>
<keyword id="KW-0479">Metal-binding</keyword>
<keyword id="KW-0511">Multifunctional enzyme</keyword>
<keyword id="KW-0533">Nickel</keyword>
<keyword id="KW-0547">Nucleotide-binding</keyword>
<keyword id="KW-0548">Nucleotidyltransferase</keyword>
<keyword id="KW-1185">Reference proteome</keyword>
<keyword id="KW-0692">RNA repair</keyword>
<keyword id="KW-0694">RNA-binding</keyword>
<keyword id="KW-0808">Transferase</keyword>
<keyword id="KW-0819">tRNA processing</keyword>
<reference key="1">
    <citation type="submission" date="2008-05" db="EMBL/GenBank/DDBJ databases">
        <title>Complete sequence of Shigella boydii serotype 18 strain BS512.</title>
        <authorList>
            <person name="Rasko D.A."/>
            <person name="Rosovitz M."/>
            <person name="Maurelli A.T."/>
            <person name="Myers G."/>
            <person name="Seshadri R."/>
            <person name="Cer R."/>
            <person name="Jiang L."/>
            <person name="Ravel J."/>
            <person name="Sebastian Y."/>
        </authorList>
    </citation>
    <scope>NUCLEOTIDE SEQUENCE [LARGE SCALE GENOMIC DNA]</scope>
    <source>
        <strain>CDC 3083-94 / BS512</strain>
    </source>
</reference>
<feature type="chain" id="PRO_1000140055" description="Multifunctional CCA protein">
    <location>
        <begin position="1"/>
        <end position="412"/>
    </location>
</feature>
<feature type="domain" description="HD" evidence="1">
    <location>
        <begin position="228"/>
        <end position="329"/>
    </location>
</feature>
<feature type="binding site" evidence="1">
    <location>
        <position position="8"/>
    </location>
    <ligand>
        <name>ATP</name>
        <dbReference type="ChEBI" id="CHEBI:30616"/>
    </ligand>
</feature>
<feature type="binding site" evidence="1">
    <location>
        <position position="8"/>
    </location>
    <ligand>
        <name>CTP</name>
        <dbReference type="ChEBI" id="CHEBI:37563"/>
    </ligand>
</feature>
<feature type="binding site" evidence="1">
    <location>
        <position position="11"/>
    </location>
    <ligand>
        <name>ATP</name>
        <dbReference type="ChEBI" id="CHEBI:30616"/>
    </ligand>
</feature>
<feature type="binding site" evidence="1">
    <location>
        <position position="11"/>
    </location>
    <ligand>
        <name>CTP</name>
        <dbReference type="ChEBI" id="CHEBI:37563"/>
    </ligand>
</feature>
<feature type="binding site" evidence="1">
    <location>
        <position position="21"/>
    </location>
    <ligand>
        <name>Mg(2+)</name>
        <dbReference type="ChEBI" id="CHEBI:18420"/>
    </ligand>
</feature>
<feature type="binding site" evidence="1">
    <location>
        <position position="23"/>
    </location>
    <ligand>
        <name>Mg(2+)</name>
        <dbReference type="ChEBI" id="CHEBI:18420"/>
    </ligand>
</feature>
<feature type="binding site" evidence="1">
    <location>
        <position position="91"/>
    </location>
    <ligand>
        <name>ATP</name>
        <dbReference type="ChEBI" id="CHEBI:30616"/>
    </ligand>
</feature>
<feature type="binding site" evidence="1">
    <location>
        <position position="91"/>
    </location>
    <ligand>
        <name>CTP</name>
        <dbReference type="ChEBI" id="CHEBI:37563"/>
    </ligand>
</feature>
<feature type="binding site" evidence="1">
    <location>
        <position position="137"/>
    </location>
    <ligand>
        <name>ATP</name>
        <dbReference type="ChEBI" id="CHEBI:30616"/>
    </ligand>
</feature>
<feature type="binding site" evidence="1">
    <location>
        <position position="137"/>
    </location>
    <ligand>
        <name>CTP</name>
        <dbReference type="ChEBI" id="CHEBI:37563"/>
    </ligand>
</feature>
<feature type="binding site" evidence="1">
    <location>
        <position position="140"/>
    </location>
    <ligand>
        <name>ATP</name>
        <dbReference type="ChEBI" id="CHEBI:30616"/>
    </ligand>
</feature>
<feature type="binding site" evidence="1">
    <location>
        <position position="140"/>
    </location>
    <ligand>
        <name>CTP</name>
        <dbReference type="ChEBI" id="CHEBI:37563"/>
    </ligand>
</feature>
<dbReference type="EC" id="2.7.7.72" evidence="1"/>
<dbReference type="EC" id="3.1.3.-" evidence="1"/>
<dbReference type="EC" id="3.1.4.-" evidence="1"/>
<dbReference type="EMBL" id="CP001063">
    <property type="protein sequence ID" value="ACD07271.1"/>
    <property type="molecule type" value="Genomic_DNA"/>
</dbReference>
<dbReference type="RefSeq" id="WP_000708501.1">
    <property type="nucleotide sequence ID" value="NC_010658.1"/>
</dbReference>
<dbReference type="SMR" id="B2U1G0"/>
<dbReference type="STRING" id="344609.SbBS512_E3487"/>
<dbReference type="KEGG" id="sbc:SbBS512_E3487"/>
<dbReference type="HOGENOM" id="CLU_015961_1_1_6"/>
<dbReference type="Proteomes" id="UP000001030">
    <property type="component" value="Chromosome"/>
</dbReference>
<dbReference type="GO" id="GO:0005524">
    <property type="term" value="F:ATP binding"/>
    <property type="evidence" value="ECO:0007669"/>
    <property type="project" value="UniProtKB-UniRule"/>
</dbReference>
<dbReference type="GO" id="GO:0004810">
    <property type="term" value="F:CCA tRNA nucleotidyltransferase activity"/>
    <property type="evidence" value="ECO:0007669"/>
    <property type="project" value="UniProtKB-UniRule"/>
</dbReference>
<dbReference type="GO" id="GO:0004112">
    <property type="term" value="F:cyclic-nucleotide phosphodiesterase activity"/>
    <property type="evidence" value="ECO:0007669"/>
    <property type="project" value="UniProtKB-UniRule"/>
</dbReference>
<dbReference type="GO" id="GO:0000287">
    <property type="term" value="F:magnesium ion binding"/>
    <property type="evidence" value="ECO:0007669"/>
    <property type="project" value="UniProtKB-UniRule"/>
</dbReference>
<dbReference type="GO" id="GO:0016791">
    <property type="term" value="F:phosphatase activity"/>
    <property type="evidence" value="ECO:0007669"/>
    <property type="project" value="UniProtKB-UniRule"/>
</dbReference>
<dbReference type="GO" id="GO:0000049">
    <property type="term" value="F:tRNA binding"/>
    <property type="evidence" value="ECO:0007669"/>
    <property type="project" value="UniProtKB-UniRule"/>
</dbReference>
<dbReference type="GO" id="GO:0042245">
    <property type="term" value="P:RNA repair"/>
    <property type="evidence" value="ECO:0007669"/>
    <property type="project" value="UniProtKB-KW"/>
</dbReference>
<dbReference type="GO" id="GO:0001680">
    <property type="term" value="P:tRNA 3'-terminal CCA addition"/>
    <property type="evidence" value="ECO:0007669"/>
    <property type="project" value="UniProtKB-UniRule"/>
</dbReference>
<dbReference type="CDD" id="cd00077">
    <property type="entry name" value="HDc"/>
    <property type="match status" value="1"/>
</dbReference>
<dbReference type="CDD" id="cd05398">
    <property type="entry name" value="NT_ClassII-CCAase"/>
    <property type="match status" value="1"/>
</dbReference>
<dbReference type="FunFam" id="1.10.3090.10:FF:000001">
    <property type="entry name" value="Multifunctional CCA protein"/>
    <property type="match status" value="1"/>
</dbReference>
<dbReference type="FunFam" id="3.30.460.10:FF:000016">
    <property type="entry name" value="Multifunctional CCA protein"/>
    <property type="match status" value="1"/>
</dbReference>
<dbReference type="Gene3D" id="3.30.460.10">
    <property type="entry name" value="Beta Polymerase, domain 2"/>
    <property type="match status" value="1"/>
</dbReference>
<dbReference type="Gene3D" id="1.10.3090.10">
    <property type="entry name" value="cca-adding enzyme, domain 2"/>
    <property type="match status" value="1"/>
</dbReference>
<dbReference type="HAMAP" id="MF_01261">
    <property type="entry name" value="CCA_bact_type1"/>
    <property type="match status" value="1"/>
</dbReference>
<dbReference type="HAMAP" id="MF_01262">
    <property type="entry name" value="CCA_bact_type2"/>
    <property type="match status" value="1"/>
</dbReference>
<dbReference type="InterPro" id="IPR012006">
    <property type="entry name" value="CCA_bact"/>
</dbReference>
<dbReference type="InterPro" id="IPR003607">
    <property type="entry name" value="HD/PDEase_dom"/>
</dbReference>
<dbReference type="InterPro" id="IPR006674">
    <property type="entry name" value="HD_domain"/>
</dbReference>
<dbReference type="InterPro" id="IPR043519">
    <property type="entry name" value="NT_sf"/>
</dbReference>
<dbReference type="InterPro" id="IPR002646">
    <property type="entry name" value="PolA_pol_head_dom"/>
</dbReference>
<dbReference type="InterPro" id="IPR032828">
    <property type="entry name" value="PolyA_RNA-bd"/>
</dbReference>
<dbReference type="InterPro" id="IPR050124">
    <property type="entry name" value="tRNA_CCA-adding_enzyme"/>
</dbReference>
<dbReference type="NCBIfam" id="NF008137">
    <property type="entry name" value="PRK10885.1"/>
    <property type="match status" value="1"/>
</dbReference>
<dbReference type="PANTHER" id="PTHR47545">
    <property type="entry name" value="MULTIFUNCTIONAL CCA PROTEIN"/>
    <property type="match status" value="1"/>
</dbReference>
<dbReference type="PANTHER" id="PTHR47545:SF1">
    <property type="entry name" value="MULTIFUNCTIONAL CCA PROTEIN"/>
    <property type="match status" value="1"/>
</dbReference>
<dbReference type="Pfam" id="PF01966">
    <property type="entry name" value="HD"/>
    <property type="match status" value="1"/>
</dbReference>
<dbReference type="Pfam" id="PF01743">
    <property type="entry name" value="PolyA_pol"/>
    <property type="match status" value="1"/>
</dbReference>
<dbReference type="Pfam" id="PF12627">
    <property type="entry name" value="PolyA_pol_RNAbd"/>
    <property type="match status" value="1"/>
</dbReference>
<dbReference type="PIRSF" id="PIRSF000813">
    <property type="entry name" value="CCA_bact"/>
    <property type="match status" value="1"/>
</dbReference>
<dbReference type="SUPFAM" id="SSF81301">
    <property type="entry name" value="Nucleotidyltransferase"/>
    <property type="match status" value="1"/>
</dbReference>
<dbReference type="SUPFAM" id="SSF81891">
    <property type="entry name" value="Poly A polymerase C-terminal region-like"/>
    <property type="match status" value="1"/>
</dbReference>
<dbReference type="PROSITE" id="PS51831">
    <property type="entry name" value="HD"/>
    <property type="match status" value="1"/>
</dbReference>